<evidence type="ECO:0000255" key="1">
    <source>
        <dbReference type="HAMAP-Rule" id="MF_01925"/>
    </source>
</evidence>
<name>P5CR_STAAW</name>
<accession>Q7A0U1</accession>
<protein>
    <recommendedName>
        <fullName evidence="1">Pyrroline-5-carboxylate reductase</fullName>
        <shortName evidence="1">P5C reductase</shortName>
        <shortName evidence="1">P5CR</shortName>
        <ecNumber evidence="1">1.5.1.2</ecNumber>
    </recommendedName>
    <alternativeName>
        <fullName evidence="1">PCA reductase</fullName>
    </alternativeName>
</protein>
<sequence>MKLVFYGAGNMAQAIFTGIINSSNLDANDIYLTNKSNEQALKAFAEKLGVNYSYDDATLLKDADYVFLGTKPHDFDALATRIKPHITKDNCFISIMAGIPIDYIKQQLECQNPVARIMPNTNAQVGHSVTGISFSNNFDPKSKDEINDLVKAFGSVIEVSEDHLHQVTAITGSGPAFLYHVFEQYVKAGTKLGLEKEQVEESIRNLIIGTSKMIERSDLSMAQLRKNITSKGGTTQAGLDTLSQYDLVSIFEDCLNAAVDRSIELSNVEDQ</sequence>
<dbReference type="EC" id="1.5.1.2" evidence="1"/>
<dbReference type="EMBL" id="BA000033">
    <property type="protein sequence ID" value="BAB95322.1"/>
    <property type="molecule type" value="Genomic_DNA"/>
</dbReference>
<dbReference type="RefSeq" id="WP_000779749.1">
    <property type="nucleotide sequence ID" value="NC_003923.1"/>
</dbReference>
<dbReference type="SMR" id="Q7A0U1"/>
<dbReference type="KEGG" id="sam:MW1457"/>
<dbReference type="HOGENOM" id="CLU_042344_0_1_9"/>
<dbReference type="UniPathway" id="UPA00098">
    <property type="reaction ID" value="UER00361"/>
</dbReference>
<dbReference type="GO" id="GO:0005737">
    <property type="term" value="C:cytoplasm"/>
    <property type="evidence" value="ECO:0007669"/>
    <property type="project" value="UniProtKB-SubCell"/>
</dbReference>
<dbReference type="GO" id="GO:0004735">
    <property type="term" value="F:pyrroline-5-carboxylate reductase activity"/>
    <property type="evidence" value="ECO:0007669"/>
    <property type="project" value="UniProtKB-UniRule"/>
</dbReference>
<dbReference type="GO" id="GO:0055129">
    <property type="term" value="P:L-proline biosynthetic process"/>
    <property type="evidence" value="ECO:0007669"/>
    <property type="project" value="UniProtKB-UniRule"/>
</dbReference>
<dbReference type="FunFam" id="1.10.3730.10:FF:000001">
    <property type="entry name" value="Pyrroline-5-carboxylate reductase"/>
    <property type="match status" value="1"/>
</dbReference>
<dbReference type="Gene3D" id="3.40.50.720">
    <property type="entry name" value="NAD(P)-binding Rossmann-like Domain"/>
    <property type="match status" value="1"/>
</dbReference>
<dbReference type="Gene3D" id="1.10.3730.10">
    <property type="entry name" value="ProC C-terminal domain-like"/>
    <property type="match status" value="1"/>
</dbReference>
<dbReference type="HAMAP" id="MF_01925">
    <property type="entry name" value="P5C_reductase"/>
    <property type="match status" value="1"/>
</dbReference>
<dbReference type="InterPro" id="IPR008927">
    <property type="entry name" value="6-PGluconate_DH-like_C_sf"/>
</dbReference>
<dbReference type="InterPro" id="IPR036291">
    <property type="entry name" value="NAD(P)-bd_dom_sf"/>
</dbReference>
<dbReference type="InterPro" id="IPR028939">
    <property type="entry name" value="P5C_Rdtase_cat_N"/>
</dbReference>
<dbReference type="InterPro" id="IPR029036">
    <property type="entry name" value="P5CR_dimer"/>
</dbReference>
<dbReference type="InterPro" id="IPR000304">
    <property type="entry name" value="Pyrroline-COOH_reductase"/>
</dbReference>
<dbReference type="NCBIfam" id="TIGR00112">
    <property type="entry name" value="proC"/>
    <property type="match status" value="1"/>
</dbReference>
<dbReference type="PANTHER" id="PTHR11645">
    <property type="entry name" value="PYRROLINE-5-CARBOXYLATE REDUCTASE"/>
    <property type="match status" value="1"/>
</dbReference>
<dbReference type="PANTHER" id="PTHR11645:SF0">
    <property type="entry name" value="PYRROLINE-5-CARBOXYLATE REDUCTASE 3"/>
    <property type="match status" value="1"/>
</dbReference>
<dbReference type="Pfam" id="PF03807">
    <property type="entry name" value="F420_oxidored"/>
    <property type="match status" value="1"/>
</dbReference>
<dbReference type="Pfam" id="PF14748">
    <property type="entry name" value="P5CR_dimer"/>
    <property type="match status" value="1"/>
</dbReference>
<dbReference type="PIRSF" id="PIRSF000193">
    <property type="entry name" value="Pyrrol-5-carb_rd"/>
    <property type="match status" value="1"/>
</dbReference>
<dbReference type="SUPFAM" id="SSF48179">
    <property type="entry name" value="6-phosphogluconate dehydrogenase C-terminal domain-like"/>
    <property type="match status" value="1"/>
</dbReference>
<dbReference type="SUPFAM" id="SSF51735">
    <property type="entry name" value="NAD(P)-binding Rossmann-fold domains"/>
    <property type="match status" value="1"/>
</dbReference>
<proteinExistence type="inferred from homology"/>
<keyword id="KW-0028">Amino-acid biosynthesis</keyword>
<keyword id="KW-0963">Cytoplasm</keyword>
<keyword id="KW-0521">NADP</keyword>
<keyword id="KW-0560">Oxidoreductase</keyword>
<keyword id="KW-0641">Proline biosynthesis</keyword>
<organism>
    <name type="scientific">Staphylococcus aureus (strain MW2)</name>
    <dbReference type="NCBI Taxonomy" id="196620"/>
    <lineage>
        <taxon>Bacteria</taxon>
        <taxon>Bacillati</taxon>
        <taxon>Bacillota</taxon>
        <taxon>Bacilli</taxon>
        <taxon>Bacillales</taxon>
        <taxon>Staphylococcaceae</taxon>
        <taxon>Staphylococcus</taxon>
    </lineage>
</organism>
<gene>
    <name evidence="1" type="primary">proC</name>
    <name type="ordered locus">MW1457</name>
</gene>
<reference key="1">
    <citation type="journal article" date="2002" name="Lancet">
        <title>Genome and virulence determinants of high virulence community-acquired MRSA.</title>
        <authorList>
            <person name="Baba T."/>
            <person name="Takeuchi F."/>
            <person name="Kuroda M."/>
            <person name="Yuzawa H."/>
            <person name="Aoki K."/>
            <person name="Oguchi A."/>
            <person name="Nagai Y."/>
            <person name="Iwama N."/>
            <person name="Asano K."/>
            <person name="Naimi T."/>
            <person name="Kuroda H."/>
            <person name="Cui L."/>
            <person name="Yamamoto K."/>
            <person name="Hiramatsu K."/>
        </authorList>
    </citation>
    <scope>NUCLEOTIDE SEQUENCE [LARGE SCALE GENOMIC DNA]</scope>
    <source>
        <strain>MW2</strain>
    </source>
</reference>
<comment type="function">
    <text evidence="1">Catalyzes the reduction of 1-pyrroline-5-carboxylate (PCA) to L-proline.</text>
</comment>
<comment type="catalytic activity">
    <reaction evidence="1">
        <text>L-proline + NADP(+) = (S)-1-pyrroline-5-carboxylate + NADPH + 2 H(+)</text>
        <dbReference type="Rhea" id="RHEA:14109"/>
        <dbReference type="ChEBI" id="CHEBI:15378"/>
        <dbReference type="ChEBI" id="CHEBI:17388"/>
        <dbReference type="ChEBI" id="CHEBI:57783"/>
        <dbReference type="ChEBI" id="CHEBI:58349"/>
        <dbReference type="ChEBI" id="CHEBI:60039"/>
        <dbReference type="EC" id="1.5.1.2"/>
    </reaction>
</comment>
<comment type="catalytic activity">
    <reaction evidence="1">
        <text>L-proline + NAD(+) = (S)-1-pyrroline-5-carboxylate + NADH + 2 H(+)</text>
        <dbReference type="Rhea" id="RHEA:14105"/>
        <dbReference type="ChEBI" id="CHEBI:15378"/>
        <dbReference type="ChEBI" id="CHEBI:17388"/>
        <dbReference type="ChEBI" id="CHEBI:57540"/>
        <dbReference type="ChEBI" id="CHEBI:57945"/>
        <dbReference type="ChEBI" id="CHEBI:60039"/>
        <dbReference type="EC" id="1.5.1.2"/>
    </reaction>
</comment>
<comment type="pathway">
    <text evidence="1">Amino-acid biosynthesis; L-proline biosynthesis; L-proline from L-glutamate 5-semialdehyde: step 1/1.</text>
</comment>
<comment type="subcellular location">
    <subcellularLocation>
        <location evidence="1">Cytoplasm</location>
    </subcellularLocation>
</comment>
<comment type="similarity">
    <text evidence="1">Belongs to the pyrroline-5-carboxylate reductase family.</text>
</comment>
<feature type="chain" id="PRO_0000187303" description="Pyrroline-5-carboxylate reductase">
    <location>
        <begin position="1"/>
        <end position="271"/>
    </location>
</feature>